<name>TRPB_CHRVO</name>
<gene>
    <name evidence="1" type="primary">trpB</name>
    <name type="ordered locus">CV_2762</name>
</gene>
<proteinExistence type="inferred from homology"/>
<protein>
    <recommendedName>
        <fullName evidence="1">Tryptophan synthase beta chain</fullName>
        <ecNumber evidence="1">4.2.1.20</ecNumber>
    </recommendedName>
</protein>
<dbReference type="EC" id="4.2.1.20" evidence="1"/>
<dbReference type="EMBL" id="AE016825">
    <property type="protein sequence ID" value="AAQ60430.1"/>
    <property type="status" value="ALT_INIT"/>
    <property type="molecule type" value="Genomic_DNA"/>
</dbReference>
<dbReference type="RefSeq" id="WP_011136309.1">
    <property type="nucleotide sequence ID" value="NC_005085.1"/>
</dbReference>
<dbReference type="SMR" id="Q7NUD8"/>
<dbReference type="STRING" id="243365.CV_2762"/>
<dbReference type="KEGG" id="cvi:CV_2762"/>
<dbReference type="eggNOG" id="COG0133">
    <property type="taxonomic scope" value="Bacteria"/>
</dbReference>
<dbReference type="HOGENOM" id="CLU_016734_3_1_4"/>
<dbReference type="OrthoDB" id="9766131at2"/>
<dbReference type="UniPathway" id="UPA00035">
    <property type="reaction ID" value="UER00044"/>
</dbReference>
<dbReference type="Proteomes" id="UP000001424">
    <property type="component" value="Chromosome"/>
</dbReference>
<dbReference type="GO" id="GO:0005737">
    <property type="term" value="C:cytoplasm"/>
    <property type="evidence" value="ECO:0007669"/>
    <property type="project" value="TreeGrafter"/>
</dbReference>
<dbReference type="GO" id="GO:0004834">
    <property type="term" value="F:tryptophan synthase activity"/>
    <property type="evidence" value="ECO:0007669"/>
    <property type="project" value="UniProtKB-UniRule"/>
</dbReference>
<dbReference type="CDD" id="cd06446">
    <property type="entry name" value="Trp-synth_B"/>
    <property type="match status" value="1"/>
</dbReference>
<dbReference type="FunFam" id="3.40.50.1100:FF:000001">
    <property type="entry name" value="Tryptophan synthase beta chain"/>
    <property type="match status" value="1"/>
</dbReference>
<dbReference type="FunFam" id="3.40.50.1100:FF:000004">
    <property type="entry name" value="Tryptophan synthase beta chain"/>
    <property type="match status" value="1"/>
</dbReference>
<dbReference type="Gene3D" id="3.40.50.1100">
    <property type="match status" value="2"/>
</dbReference>
<dbReference type="HAMAP" id="MF_00133">
    <property type="entry name" value="Trp_synth_beta"/>
    <property type="match status" value="1"/>
</dbReference>
<dbReference type="InterPro" id="IPR006653">
    <property type="entry name" value="Trp_synth_b_CS"/>
</dbReference>
<dbReference type="InterPro" id="IPR006654">
    <property type="entry name" value="Trp_synth_beta"/>
</dbReference>
<dbReference type="InterPro" id="IPR023026">
    <property type="entry name" value="Trp_synth_beta/beta-like"/>
</dbReference>
<dbReference type="InterPro" id="IPR001926">
    <property type="entry name" value="TrpB-like_PALP"/>
</dbReference>
<dbReference type="InterPro" id="IPR036052">
    <property type="entry name" value="TrpB-like_PALP_sf"/>
</dbReference>
<dbReference type="NCBIfam" id="TIGR00263">
    <property type="entry name" value="trpB"/>
    <property type="match status" value="1"/>
</dbReference>
<dbReference type="PANTHER" id="PTHR48077:SF3">
    <property type="entry name" value="TRYPTOPHAN SYNTHASE"/>
    <property type="match status" value="1"/>
</dbReference>
<dbReference type="PANTHER" id="PTHR48077">
    <property type="entry name" value="TRYPTOPHAN SYNTHASE-RELATED"/>
    <property type="match status" value="1"/>
</dbReference>
<dbReference type="Pfam" id="PF00291">
    <property type="entry name" value="PALP"/>
    <property type="match status" value="1"/>
</dbReference>
<dbReference type="PIRSF" id="PIRSF001413">
    <property type="entry name" value="Trp_syn_beta"/>
    <property type="match status" value="1"/>
</dbReference>
<dbReference type="SUPFAM" id="SSF53686">
    <property type="entry name" value="Tryptophan synthase beta subunit-like PLP-dependent enzymes"/>
    <property type="match status" value="1"/>
</dbReference>
<dbReference type="PROSITE" id="PS00168">
    <property type="entry name" value="TRP_SYNTHASE_BETA"/>
    <property type="match status" value="1"/>
</dbReference>
<keyword id="KW-0028">Amino-acid biosynthesis</keyword>
<keyword id="KW-0057">Aromatic amino acid biosynthesis</keyword>
<keyword id="KW-0456">Lyase</keyword>
<keyword id="KW-0663">Pyridoxal phosphate</keyword>
<keyword id="KW-1185">Reference proteome</keyword>
<keyword id="KW-0822">Tryptophan biosynthesis</keyword>
<evidence type="ECO:0000255" key="1">
    <source>
        <dbReference type="HAMAP-Rule" id="MF_00133"/>
    </source>
</evidence>
<evidence type="ECO:0000305" key="2"/>
<organism>
    <name type="scientific">Chromobacterium violaceum (strain ATCC 12472 / DSM 30191 / JCM 1249 / CCUG 213 / NBRC 12614 / NCIMB 9131 / NCTC 9757 / MK)</name>
    <dbReference type="NCBI Taxonomy" id="243365"/>
    <lineage>
        <taxon>Bacteria</taxon>
        <taxon>Pseudomonadati</taxon>
        <taxon>Pseudomonadota</taxon>
        <taxon>Betaproteobacteria</taxon>
        <taxon>Neisseriales</taxon>
        <taxon>Chromobacteriaceae</taxon>
        <taxon>Chromobacterium</taxon>
    </lineage>
</organism>
<reference key="1">
    <citation type="journal article" date="2003" name="Proc. Natl. Acad. Sci. U.S.A.">
        <title>The complete genome sequence of Chromobacterium violaceum reveals remarkable and exploitable bacterial adaptability.</title>
        <authorList>
            <person name="Vasconcelos A.T.R."/>
            <person name="de Almeida D.F."/>
            <person name="Hungria M."/>
            <person name="Guimaraes C.T."/>
            <person name="Antonio R.V."/>
            <person name="Almeida F.C."/>
            <person name="de Almeida L.G.P."/>
            <person name="de Almeida R."/>
            <person name="Alves-Gomes J.A."/>
            <person name="Andrade E.M."/>
            <person name="Araripe J."/>
            <person name="de Araujo M.F.F."/>
            <person name="Astolfi-Filho S."/>
            <person name="Azevedo V."/>
            <person name="Baptista A.J."/>
            <person name="Bataus L.A.M."/>
            <person name="Batista J.S."/>
            <person name="Belo A."/>
            <person name="van den Berg C."/>
            <person name="Bogo M."/>
            <person name="Bonatto S."/>
            <person name="Bordignon J."/>
            <person name="Brigido M.M."/>
            <person name="Brito C.A."/>
            <person name="Brocchi M."/>
            <person name="Burity H.A."/>
            <person name="Camargo A.A."/>
            <person name="Cardoso D.D.P."/>
            <person name="Carneiro N.P."/>
            <person name="Carraro D.M."/>
            <person name="Carvalho C.M.B."/>
            <person name="Cascardo J.C.M."/>
            <person name="Cavada B.S."/>
            <person name="Chueire L.M.O."/>
            <person name="Creczynski-Pasa T.B."/>
            <person name="Cunha-Junior N.C."/>
            <person name="Fagundes N."/>
            <person name="Falcao C.L."/>
            <person name="Fantinatti F."/>
            <person name="Farias I.P."/>
            <person name="Felipe M.S.S."/>
            <person name="Ferrari L.P."/>
            <person name="Ferro J.A."/>
            <person name="Ferro M.I.T."/>
            <person name="Franco G.R."/>
            <person name="Freitas N.S.A."/>
            <person name="Furlan L.R."/>
            <person name="Gazzinelli R.T."/>
            <person name="Gomes E.A."/>
            <person name="Goncalves P.R."/>
            <person name="Grangeiro T.B."/>
            <person name="Grattapaglia D."/>
            <person name="Grisard E.C."/>
            <person name="Hanna E.S."/>
            <person name="Jardim S.N."/>
            <person name="Laurino J."/>
            <person name="Leoi L.C.T."/>
            <person name="Lima L.F.A."/>
            <person name="Loureiro M.F."/>
            <person name="Lyra M.C.C.P."/>
            <person name="Madeira H.M.F."/>
            <person name="Manfio G.P."/>
            <person name="Maranhao A.Q."/>
            <person name="Martins W.S."/>
            <person name="di Mauro S.M.Z."/>
            <person name="de Medeiros S.R.B."/>
            <person name="Meissner R.V."/>
            <person name="Moreira M.A.M."/>
            <person name="Nascimento F.F."/>
            <person name="Nicolas M.F."/>
            <person name="Oliveira J.G."/>
            <person name="Oliveira S.C."/>
            <person name="Paixao R.F.C."/>
            <person name="Parente J.A."/>
            <person name="Pedrosa F.O."/>
            <person name="Pena S.D.J."/>
            <person name="Pereira J.O."/>
            <person name="Pereira M."/>
            <person name="Pinto L.S.R.C."/>
            <person name="Pinto L.S."/>
            <person name="Porto J.I.R."/>
            <person name="Potrich D.P."/>
            <person name="Ramalho-Neto C.E."/>
            <person name="Reis A.M.M."/>
            <person name="Rigo L.U."/>
            <person name="Rondinelli E."/>
            <person name="Santos E.B.P."/>
            <person name="Santos F.R."/>
            <person name="Schneider M.P.C."/>
            <person name="Seuanez H.N."/>
            <person name="Silva A.M.R."/>
            <person name="da Silva A.L.C."/>
            <person name="Silva D.W."/>
            <person name="Silva R."/>
            <person name="Simoes I.C."/>
            <person name="Simon D."/>
            <person name="Soares C.M.A."/>
            <person name="Soares R.B.A."/>
            <person name="Souza E.M."/>
            <person name="Souza K.R.L."/>
            <person name="Souza R.C."/>
            <person name="Steffens M.B.R."/>
            <person name="Steindel M."/>
            <person name="Teixeira S.R."/>
            <person name="Urmenyi T."/>
            <person name="Vettore A."/>
            <person name="Wassem R."/>
            <person name="Zaha A."/>
            <person name="Simpson A.J.G."/>
        </authorList>
    </citation>
    <scope>NUCLEOTIDE SEQUENCE [LARGE SCALE GENOMIC DNA]</scope>
    <source>
        <strain>ATCC 12472 / DSM 30191 / JCM 1249 / CCUG 213 / NBRC 12614 / NCIMB 9131 / NCTC 9757 / MK</strain>
    </source>
</reference>
<accession>Q7NUD8</accession>
<sequence>MDRYDFPDAQGHFGPYGGVYVAETLMVALDQLKEEYARVKADPTFWQEFHHELKHYVGRPSPVYHAKRWSEQLGGAQIWFKREDLNHTGAHKINNAIGQALLARRMGKKRVIAETGAGQHGVATATVAARYGMECVVYMGAEDVKRQSPNVFRMKLLGATVVPVESGSKTLKDALNEAMRDWVTNVDSTFYILGTAAGPHPYPMLVRDFVSVIGAESKIQMPEAIGRQPDVVVACVGGGSNAIGMFHPYIEVPGVRMVGVEAGGHGVASGKHAAPISSGAPVGVLHGSKSYLMQDADGQIVETHSVSAGLDYPGVGPEHCHLKDIGRAEYVSIDDDEALRAFHDCCHLEGIIPALESSHALAWAAKVAPSMGKDQVILVNLSGRGDKDINTVAGLAGITL</sequence>
<comment type="function">
    <text evidence="1">The beta subunit is responsible for the synthesis of L-tryptophan from indole and L-serine.</text>
</comment>
<comment type="catalytic activity">
    <reaction evidence="1">
        <text>(1S,2R)-1-C-(indol-3-yl)glycerol 3-phosphate + L-serine = D-glyceraldehyde 3-phosphate + L-tryptophan + H2O</text>
        <dbReference type="Rhea" id="RHEA:10532"/>
        <dbReference type="ChEBI" id="CHEBI:15377"/>
        <dbReference type="ChEBI" id="CHEBI:33384"/>
        <dbReference type="ChEBI" id="CHEBI:57912"/>
        <dbReference type="ChEBI" id="CHEBI:58866"/>
        <dbReference type="ChEBI" id="CHEBI:59776"/>
        <dbReference type="EC" id="4.2.1.20"/>
    </reaction>
</comment>
<comment type="cofactor">
    <cofactor evidence="1">
        <name>pyridoxal 5'-phosphate</name>
        <dbReference type="ChEBI" id="CHEBI:597326"/>
    </cofactor>
</comment>
<comment type="pathway">
    <text evidence="1">Amino-acid biosynthesis; L-tryptophan biosynthesis; L-tryptophan from chorismate: step 5/5.</text>
</comment>
<comment type="subunit">
    <text evidence="1">Tetramer of two alpha and two beta chains.</text>
</comment>
<comment type="similarity">
    <text evidence="1">Belongs to the TrpB family.</text>
</comment>
<comment type="sequence caution" evidence="2">
    <conflict type="erroneous initiation">
        <sequence resource="EMBL-CDS" id="AAQ60430"/>
    </conflict>
</comment>
<feature type="chain" id="PRO_0000098942" description="Tryptophan synthase beta chain">
    <location>
        <begin position="1"/>
        <end position="400"/>
    </location>
</feature>
<feature type="modified residue" description="N6-(pyridoxal phosphate)lysine" evidence="1">
    <location>
        <position position="92"/>
    </location>
</feature>